<protein>
    <recommendedName>
        <fullName>Serine/threonine-protein kinase SBK1</fullName>
        <ecNumber>2.7.11.1</ecNumber>
    </recommendedName>
    <alternativeName>
        <fullName>Brain-specific protein kinase BSK146</fullName>
    </alternativeName>
    <alternativeName>
        <fullName>SH3 domain-binding kinase 1</fullName>
    </alternativeName>
</protein>
<reference key="1">
    <citation type="journal article" date="2006" name="Biochem. Biophys. Res. Commun.">
        <title>Expression and characterization of a brain-specific protein kinase BSK146 from zebrafish.</title>
        <authorList>
            <person name="Chou C.-M."/>
            <person name="Chen Y.-C."/>
            <person name="Lee M.-T."/>
            <person name="Chen G.-D."/>
            <person name="Lu I.-C."/>
            <person name="Chen S.-T."/>
            <person name="Huang C.-J."/>
        </authorList>
    </citation>
    <scope>NUCLEOTIDE SEQUENCE [MRNA]</scope>
    <scope>MUTAGENESIS OF LYS-61</scope>
    <scope>FUNCTION</scope>
    <scope>TISSUE SPECIFICITY</scope>
    <scope>SUBCELLULAR LOCATION</scope>
</reference>
<evidence type="ECO:0000250" key="1"/>
<evidence type="ECO:0000255" key="2">
    <source>
        <dbReference type="PROSITE-ProRule" id="PRU00159"/>
    </source>
</evidence>
<evidence type="ECO:0000255" key="3">
    <source>
        <dbReference type="PROSITE-ProRule" id="PRU10027"/>
    </source>
</evidence>
<evidence type="ECO:0000256" key="4">
    <source>
        <dbReference type="SAM" id="MobiDB-lite"/>
    </source>
</evidence>
<evidence type="ECO:0000269" key="5">
    <source>
    </source>
</evidence>
<gene>
    <name type="primary">sbk1</name>
    <name type="synonym">bsk146</name>
</gene>
<sequence length="385" mass="43913">MSSSPVVSRDILEELQLYTAQNLEKLEVNKYYEVIRELGKGTYGKVDLVIHKIRGSKMALKFLKKKSTKLKSFLREYSISLYLSPCPFIINMFGIAFETDEYYVFAQEYAPSGDLFDIIPPQVGLPEPVAKRCVHQVAIALEYLHSKKLVHRDIKPENILIFDKECRKVKLSDFGMTRRAGSPVKRVSGTIPYTAPELCDTSKHDGFCVDYSTDVWAFGVLLFCMLTGNFPWEKAMPSDTFYEEFVRWQKRRTGAVPSQWRRFTDESLRMFRKLLALEQERRCSVKEVFAHLGHRWMLDGTSGNHHQSVLNSSSEEDELLVDRMKQQTLSPTANTSNAIEPGSANHFTSMSTNSSVSSTNSYERSARDSPPTSRILVTTPIEICV</sequence>
<keyword id="KW-0067">ATP-binding</keyword>
<keyword id="KW-0963">Cytoplasm</keyword>
<keyword id="KW-0418">Kinase</keyword>
<keyword id="KW-0547">Nucleotide-binding</keyword>
<keyword id="KW-1185">Reference proteome</keyword>
<keyword id="KW-0723">Serine/threonine-protein kinase</keyword>
<keyword id="KW-0808">Transferase</keyword>
<dbReference type="EC" id="2.7.11.1"/>
<dbReference type="EMBL" id="AF265347">
    <property type="protein sequence ID" value="AAK52420.1"/>
    <property type="molecule type" value="mRNA"/>
</dbReference>
<dbReference type="RefSeq" id="NP_998006.1">
    <property type="nucleotide sequence ID" value="NM_212841.1"/>
</dbReference>
<dbReference type="SMR" id="Q90ZY4"/>
<dbReference type="FunCoup" id="Q90ZY4">
    <property type="interactions" value="4"/>
</dbReference>
<dbReference type="STRING" id="7955.ENSDARP00000134385"/>
<dbReference type="PaxDb" id="7955-ENSDARP00000109713"/>
<dbReference type="GeneID" id="405767"/>
<dbReference type="KEGG" id="dre:405767"/>
<dbReference type="AGR" id="ZFIN:ZDB-GENE-060313-3"/>
<dbReference type="CTD" id="405767"/>
<dbReference type="ZFIN" id="ZDB-GENE-060313-3">
    <property type="gene designation" value="bsk146"/>
</dbReference>
<dbReference type="eggNOG" id="KOG1345">
    <property type="taxonomic scope" value="Eukaryota"/>
</dbReference>
<dbReference type="InParanoid" id="Q90ZY4"/>
<dbReference type="OrthoDB" id="6513151at2759"/>
<dbReference type="PhylomeDB" id="Q90ZY4"/>
<dbReference type="PRO" id="PR:Q90ZY4"/>
<dbReference type="Proteomes" id="UP000000437">
    <property type="component" value="Chromosome 12"/>
</dbReference>
<dbReference type="GO" id="GO:0005737">
    <property type="term" value="C:cytoplasm"/>
    <property type="evidence" value="ECO:0007669"/>
    <property type="project" value="UniProtKB-SubCell"/>
</dbReference>
<dbReference type="GO" id="GO:0005524">
    <property type="term" value="F:ATP binding"/>
    <property type="evidence" value="ECO:0007669"/>
    <property type="project" value="UniProtKB-KW"/>
</dbReference>
<dbReference type="GO" id="GO:0004672">
    <property type="term" value="F:protein kinase activity"/>
    <property type="evidence" value="ECO:0000314"/>
    <property type="project" value="ZFIN"/>
</dbReference>
<dbReference type="GO" id="GO:0106310">
    <property type="term" value="F:protein serine kinase activity"/>
    <property type="evidence" value="ECO:0007669"/>
    <property type="project" value="RHEA"/>
</dbReference>
<dbReference type="GO" id="GO:0004674">
    <property type="term" value="F:protein serine/threonine kinase activity"/>
    <property type="evidence" value="ECO:0000318"/>
    <property type="project" value="GO_Central"/>
</dbReference>
<dbReference type="CDD" id="cd13987">
    <property type="entry name" value="STKc_SBK1"/>
    <property type="match status" value="1"/>
</dbReference>
<dbReference type="FunFam" id="1.10.510.10:FF:000337">
    <property type="entry name" value="Serine/threonine-protein kinase SBK1"/>
    <property type="match status" value="1"/>
</dbReference>
<dbReference type="Gene3D" id="1.10.510.10">
    <property type="entry name" value="Transferase(Phosphotransferase) domain 1"/>
    <property type="match status" value="1"/>
</dbReference>
<dbReference type="InterPro" id="IPR011009">
    <property type="entry name" value="Kinase-like_dom_sf"/>
</dbReference>
<dbReference type="InterPro" id="IPR000719">
    <property type="entry name" value="Prot_kinase_dom"/>
</dbReference>
<dbReference type="InterPro" id="IPR008271">
    <property type="entry name" value="Ser/Thr_kinase_AS"/>
</dbReference>
<dbReference type="InterPro" id="IPR016234">
    <property type="entry name" value="Ser/Thr_kinase_Sbk1"/>
</dbReference>
<dbReference type="PANTHER" id="PTHR24359">
    <property type="entry name" value="SERINE/THREONINE-PROTEIN KINASE SBK1"/>
    <property type="match status" value="1"/>
</dbReference>
<dbReference type="PANTHER" id="PTHR24359:SF19">
    <property type="entry name" value="SERINE_THREONINE-PROTEIN KINASE SBK1"/>
    <property type="match status" value="1"/>
</dbReference>
<dbReference type="Pfam" id="PF00069">
    <property type="entry name" value="Pkinase"/>
    <property type="match status" value="1"/>
</dbReference>
<dbReference type="PIRSF" id="PIRSF000566">
    <property type="entry name" value="Ser/Thr_PK_Sbk1"/>
    <property type="match status" value="1"/>
</dbReference>
<dbReference type="SMART" id="SM00220">
    <property type="entry name" value="S_TKc"/>
    <property type="match status" value="1"/>
</dbReference>
<dbReference type="SUPFAM" id="SSF56112">
    <property type="entry name" value="Protein kinase-like (PK-like)"/>
    <property type="match status" value="1"/>
</dbReference>
<dbReference type="PROSITE" id="PS50011">
    <property type="entry name" value="PROTEIN_KINASE_DOM"/>
    <property type="match status" value="1"/>
</dbReference>
<dbReference type="PROSITE" id="PS00108">
    <property type="entry name" value="PROTEIN_KINASE_ST"/>
    <property type="match status" value="1"/>
</dbReference>
<comment type="function">
    <text evidence="5">May be involved in the control of neuronal proliferation or migration in the brain of embryos.</text>
</comment>
<comment type="catalytic activity">
    <reaction>
        <text>L-seryl-[protein] + ATP = O-phospho-L-seryl-[protein] + ADP + H(+)</text>
        <dbReference type="Rhea" id="RHEA:17989"/>
        <dbReference type="Rhea" id="RHEA-COMP:9863"/>
        <dbReference type="Rhea" id="RHEA-COMP:11604"/>
        <dbReference type="ChEBI" id="CHEBI:15378"/>
        <dbReference type="ChEBI" id="CHEBI:29999"/>
        <dbReference type="ChEBI" id="CHEBI:30616"/>
        <dbReference type="ChEBI" id="CHEBI:83421"/>
        <dbReference type="ChEBI" id="CHEBI:456216"/>
        <dbReference type="EC" id="2.7.11.1"/>
    </reaction>
</comment>
<comment type="catalytic activity">
    <reaction>
        <text>L-threonyl-[protein] + ATP = O-phospho-L-threonyl-[protein] + ADP + H(+)</text>
        <dbReference type="Rhea" id="RHEA:46608"/>
        <dbReference type="Rhea" id="RHEA-COMP:11060"/>
        <dbReference type="Rhea" id="RHEA-COMP:11605"/>
        <dbReference type="ChEBI" id="CHEBI:15378"/>
        <dbReference type="ChEBI" id="CHEBI:30013"/>
        <dbReference type="ChEBI" id="CHEBI:30616"/>
        <dbReference type="ChEBI" id="CHEBI:61977"/>
        <dbReference type="ChEBI" id="CHEBI:456216"/>
        <dbReference type="EC" id="2.7.11.1"/>
    </reaction>
</comment>
<comment type="subcellular location">
    <subcellularLocation>
        <location evidence="1">Cytoplasm</location>
    </subcellularLocation>
</comment>
<comment type="tissue specificity">
    <text evidence="5">Mainly expressed in brain.</text>
</comment>
<comment type="developmental stage">
    <text>Expressed predominantly in the developing neural structures. Levels gradually increases from 36 to 144 hpf.</text>
</comment>
<comment type="similarity">
    <text evidence="2">Belongs to the protein kinase superfamily. Ser/Thr protein kinase family.</text>
</comment>
<feature type="chain" id="PRO_0000238454" description="Serine/threonine-protein kinase SBK1">
    <location>
        <begin position="1"/>
        <end position="385"/>
    </location>
</feature>
<feature type="domain" description="Protein kinase" evidence="2">
    <location>
        <begin position="32"/>
        <end position="297"/>
    </location>
</feature>
<feature type="region of interest" description="Disordered" evidence="4">
    <location>
        <begin position="328"/>
        <end position="374"/>
    </location>
</feature>
<feature type="compositionally biased region" description="Polar residues" evidence="4">
    <location>
        <begin position="328"/>
        <end position="338"/>
    </location>
</feature>
<feature type="compositionally biased region" description="Low complexity" evidence="4">
    <location>
        <begin position="348"/>
        <end position="361"/>
    </location>
</feature>
<feature type="active site" description="Proton acceptor" evidence="2 3">
    <location>
        <position position="153"/>
    </location>
</feature>
<feature type="binding site" evidence="2">
    <location>
        <begin position="38"/>
        <end position="46"/>
    </location>
    <ligand>
        <name>ATP</name>
        <dbReference type="ChEBI" id="CHEBI:30616"/>
    </ligand>
</feature>
<feature type="binding site" evidence="2">
    <location>
        <position position="61"/>
    </location>
    <ligand>
        <name>ATP</name>
        <dbReference type="ChEBI" id="CHEBI:30616"/>
    </ligand>
</feature>
<feature type="mutagenesis site" description="Loss of activity." evidence="5">
    <original>K</original>
    <variation>R</variation>
    <location>
        <position position="61"/>
    </location>
</feature>
<proteinExistence type="evidence at protein level"/>
<accession>Q90ZY4</accession>
<organism>
    <name type="scientific">Danio rerio</name>
    <name type="common">Zebrafish</name>
    <name type="synonym">Brachydanio rerio</name>
    <dbReference type="NCBI Taxonomy" id="7955"/>
    <lineage>
        <taxon>Eukaryota</taxon>
        <taxon>Metazoa</taxon>
        <taxon>Chordata</taxon>
        <taxon>Craniata</taxon>
        <taxon>Vertebrata</taxon>
        <taxon>Euteleostomi</taxon>
        <taxon>Actinopterygii</taxon>
        <taxon>Neopterygii</taxon>
        <taxon>Teleostei</taxon>
        <taxon>Ostariophysi</taxon>
        <taxon>Cypriniformes</taxon>
        <taxon>Danionidae</taxon>
        <taxon>Danioninae</taxon>
        <taxon>Danio</taxon>
    </lineage>
</organism>
<name>SBK1_DANRE</name>